<gene>
    <name evidence="1" type="primary">whiA</name>
    <name type="ordered locus">Teth514_1189</name>
</gene>
<name>WHIA_THEPX</name>
<protein>
    <recommendedName>
        <fullName evidence="1">Probable cell division protein WhiA</fullName>
    </recommendedName>
</protein>
<feature type="chain" id="PRO_0000376605" description="Probable cell division protein WhiA">
    <location>
        <begin position="1"/>
        <end position="318"/>
    </location>
</feature>
<feature type="DNA-binding region" description="H-T-H motif" evidence="1">
    <location>
        <begin position="281"/>
        <end position="314"/>
    </location>
</feature>
<accession>B0K6K7</accession>
<sequence length="318" mass="36096">MSFSSDTKDELARIYPEEEESKIAELAALIRTIGSISMYGNGKISLTFTTENASVARLVFKLIKDLFGIIPETMVRRGRYLKKTLSYLIFVPDTKIAEEILGKVKILNYEKGHIKLNYGIDQKILKNSKAKKAYLRGAFLGGGSISDPEKAYHMEFITHNLEHGKDLSKLINSFDLNSKVIARKNNYVVYLKEGEQIVDVLNIIGAHSALLNLENIRVYKEMRNNVNRIVNCETANLTKTINASLRQIESINYIKETVGLDYLPPNLKEVAELRINYPDLSLKELGQMLVPPVGKSGVNHRLRKIEEISKKLKERRVQ</sequence>
<keyword id="KW-0131">Cell cycle</keyword>
<keyword id="KW-0132">Cell division</keyword>
<keyword id="KW-0238">DNA-binding</keyword>
<evidence type="ECO:0000255" key="1">
    <source>
        <dbReference type="HAMAP-Rule" id="MF_01420"/>
    </source>
</evidence>
<dbReference type="EMBL" id="CP000923">
    <property type="protein sequence ID" value="ABY92483.1"/>
    <property type="molecule type" value="Genomic_DNA"/>
</dbReference>
<dbReference type="RefSeq" id="WP_009052941.1">
    <property type="nucleotide sequence ID" value="NC_010320.1"/>
</dbReference>
<dbReference type="SMR" id="B0K6K7"/>
<dbReference type="KEGG" id="tex:Teth514_1189"/>
<dbReference type="HOGENOM" id="CLU_053282_0_0_9"/>
<dbReference type="Proteomes" id="UP000002155">
    <property type="component" value="Chromosome"/>
</dbReference>
<dbReference type="GO" id="GO:0003677">
    <property type="term" value="F:DNA binding"/>
    <property type="evidence" value="ECO:0007669"/>
    <property type="project" value="UniProtKB-UniRule"/>
</dbReference>
<dbReference type="GO" id="GO:0051301">
    <property type="term" value="P:cell division"/>
    <property type="evidence" value="ECO:0007669"/>
    <property type="project" value="UniProtKB-UniRule"/>
</dbReference>
<dbReference type="GO" id="GO:0043937">
    <property type="term" value="P:regulation of sporulation"/>
    <property type="evidence" value="ECO:0007669"/>
    <property type="project" value="InterPro"/>
</dbReference>
<dbReference type="Gene3D" id="3.10.28.10">
    <property type="entry name" value="Homing endonucleases"/>
    <property type="match status" value="1"/>
</dbReference>
<dbReference type="HAMAP" id="MF_01420">
    <property type="entry name" value="HTH_type_WhiA"/>
    <property type="match status" value="1"/>
</dbReference>
<dbReference type="InterPro" id="IPR027434">
    <property type="entry name" value="Homing_endonucl"/>
</dbReference>
<dbReference type="InterPro" id="IPR018478">
    <property type="entry name" value="Sporu_reg_WhiA_N_dom"/>
</dbReference>
<dbReference type="InterPro" id="IPR003802">
    <property type="entry name" value="Sporulation_regulator_WhiA"/>
</dbReference>
<dbReference type="InterPro" id="IPR023054">
    <property type="entry name" value="Sporulation_regulator_WhiA_C"/>
</dbReference>
<dbReference type="InterPro" id="IPR039518">
    <property type="entry name" value="WhiA_LAGLIDADG_dom"/>
</dbReference>
<dbReference type="NCBIfam" id="TIGR00647">
    <property type="entry name" value="DNA_bind_WhiA"/>
    <property type="match status" value="1"/>
</dbReference>
<dbReference type="PANTHER" id="PTHR37307">
    <property type="entry name" value="CELL DIVISION PROTEIN WHIA-RELATED"/>
    <property type="match status" value="1"/>
</dbReference>
<dbReference type="PANTHER" id="PTHR37307:SF1">
    <property type="entry name" value="CELL DIVISION PROTEIN WHIA-RELATED"/>
    <property type="match status" value="1"/>
</dbReference>
<dbReference type="Pfam" id="PF02650">
    <property type="entry name" value="HTH_WhiA"/>
    <property type="match status" value="1"/>
</dbReference>
<dbReference type="Pfam" id="PF14527">
    <property type="entry name" value="LAGLIDADG_WhiA"/>
    <property type="match status" value="1"/>
</dbReference>
<dbReference type="Pfam" id="PF10298">
    <property type="entry name" value="WhiA_N"/>
    <property type="match status" value="1"/>
</dbReference>
<dbReference type="SUPFAM" id="SSF55608">
    <property type="entry name" value="Homing endonucleases"/>
    <property type="match status" value="1"/>
</dbReference>
<reference key="1">
    <citation type="submission" date="2008-01" db="EMBL/GenBank/DDBJ databases">
        <title>Complete sequence of Thermoanaerobacter sp. X514.</title>
        <authorList>
            <consortium name="US DOE Joint Genome Institute"/>
            <person name="Copeland A."/>
            <person name="Lucas S."/>
            <person name="Lapidus A."/>
            <person name="Barry K."/>
            <person name="Glavina del Rio T."/>
            <person name="Dalin E."/>
            <person name="Tice H."/>
            <person name="Pitluck S."/>
            <person name="Bruce D."/>
            <person name="Goodwin L."/>
            <person name="Saunders E."/>
            <person name="Brettin T."/>
            <person name="Detter J.C."/>
            <person name="Han C."/>
            <person name="Schmutz J."/>
            <person name="Larimer F."/>
            <person name="Land M."/>
            <person name="Hauser L."/>
            <person name="Kyrpides N."/>
            <person name="Kim E."/>
            <person name="Hemme C."/>
            <person name="Fields M.W."/>
            <person name="He Z."/>
            <person name="Zhou J."/>
            <person name="Richardson P."/>
        </authorList>
    </citation>
    <scope>NUCLEOTIDE SEQUENCE [LARGE SCALE GENOMIC DNA]</scope>
    <source>
        <strain>X514</strain>
    </source>
</reference>
<proteinExistence type="inferred from homology"/>
<organism>
    <name type="scientific">Thermoanaerobacter sp. (strain X514)</name>
    <dbReference type="NCBI Taxonomy" id="399726"/>
    <lineage>
        <taxon>Bacteria</taxon>
        <taxon>Bacillati</taxon>
        <taxon>Bacillota</taxon>
        <taxon>Clostridia</taxon>
        <taxon>Thermoanaerobacterales</taxon>
        <taxon>Thermoanaerobacteraceae</taxon>
        <taxon>Thermoanaerobacter</taxon>
    </lineage>
</organism>
<comment type="function">
    <text evidence="1">Involved in cell division and chromosome segregation.</text>
</comment>
<comment type="similarity">
    <text evidence="1">Belongs to the WhiA family.</text>
</comment>